<accession>B6J8K2</accession>
<keyword id="KW-0030">Aminoacyl-tRNA synthetase</keyword>
<keyword id="KW-0067">ATP-binding</keyword>
<keyword id="KW-0963">Cytoplasm</keyword>
<keyword id="KW-0436">Ligase</keyword>
<keyword id="KW-0460">Magnesium</keyword>
<keyword id="KW-0479">Metal-binding</keyword>
<keyword id="KW-0547">Nucleotide-binding</keyword>
<keyword id="KW-0648">Protein biosynthesis</keyword>
<reference key="1">
    <citation type="journal article" date="2009" name="Infect. Immun.">
        <title>Comparative genomics reveal extensive transposon-mediated genomic plasticity and diversity among potential effector proteins within the genus Coxiella.</title>
        <authorList>
            <person name="Beare P.A."/>
            <person name="Unsworth N."/>
            <person name="Andoh M."/>
            <person name="Voth D.E."/>
            <person name="Omsland A."/>
            <person name="Gilk S.D."/>
            <person name="Williams K.P."/>
            <person name="Sobral B.W."/>
            <person name="Kupko J.J. III"/>
            <person name="Porcella S.F."/>
            <person name="Samuel J.E."/>
            <person name="Heinzen R.A."/>
        </authorList>
    </citation>
    <scope>NUCLEOTIDE SEQUENCE [LARGE SCALE GENOMIC DNA]</scope>
    <source>
        <strain>CbuK_Q154</strain>
    </source>
</reference>
<feature type="chain" id="PRO_1000101113" description="Lysine--tRNA ligase">
    <location>
        <begin position="1"/>
        <end position="498"/>
    </location>
</feature>
<feature type="binding site" evidence="1">
    <location>
        <position position="409"/>
    </location>
    <ligand>
        <name>Mg(2+)</name>
        <dbReference type="ChEBI" id="CHEBI:18420"/>
        <label>1</label>
    </ligand>
</feature>
<feature type="binding site" evidence="1">
    <location>
        <position position="416"/>
    </location>
    <ligand>
        <name>Mg(2+)</name>
        <dbReference type="ChEBI" id="CHEBI:18420"/>
        <label>1</label>
    </ligand>
</feature>
<feature type="binding site" evidence="1">
    <location>
        <position position="416"/>
    </location>
    <ligand>
        <name>Mg(2+)</name>
        <dbReference type="ChEBI" id="CHEBI:18420"/>
        <label>2</label>
    </ligand>
</feature>
<gene>
    <name evidence="1" type="primary">lysS</name>
    <name type="ordered locus">CbuK_1428</name>
</gene>
<organism>
    <name type="scientific">Coxiella burnetii (strain CbuK_Q154)</name>
    <name type="common">Coxiella burnetii (strain Q154)</name>
    <dbReference type="NCBI Taxonomy" id="434924"/>
    <lineage>
        <taxon>Bacteria</taxon>
        <taxon>Pseudomonadati</taxon>
        <taxon>Pseudomonadota</taxon>
        <taxon>Gammaproteobacteria</taxon>
        <taxon>Legionellales</taxon>
        <taxon>Coxiellaceae</taxon>
        <taxon>Coxiella</taxon>
    </lineage>
</organism>
<proteinExistence type="inferred from homology"/>
<evidence type="ECO:0000255" key="1">
    <source>
        <dbReference type="HAMAP-Rule" id="MF_00252"/>
    </source>
</evidence>
<name>SYK_COXB1</name>
<sequence>MELKDQIKEENEQIAQRKLKLKKRREEGQAYPNDFKRDSLAADLHAVYDQFDSGALTAKAIRVKMAGRMMTRRIMGKASFAHIQDMKGRMQIYVTRDSLPQGVYSDFKSWDLGDIVGIEGELFKTKTEELSVKVDQIRLLTKALRPMPDKFHGLHDQEQRFRQRYLDLIVNESSRHLFQTRSQVIAQIRRFLDDRGYIEVETPMMHPLPGGAAARPFETHHNAMNMDLFLRIAPELYLKRLVVGGFEKVYEINRNFRNEGISTRHNPEFTMLEFYQAYATYEDMMMLTESMIRHLAEKIFGVMEIKYQGVRIDLNKPFPRLSLRDAILQFNPGITPDQIDHLETARELAHKYEIATPAHYGLGKIQTELFEKLVEEKLQQPIFITHFPKEVSPLSRANEENDFITDRFEFYVGGREIANGFSELNDPEDQAARFREQLKARNAGDLEAMSFDEDYITALEYGLPPTAGEGIGIDRLVMLFTDNASIRDVILFPLLRSK</sequence>
<protein>
    <recommendedName>
        <fullName evidence="1">Lysine--tRNA ligase</fullName>
        <ecNumber evidence="1">6.1.1.6</ecNumber>
    </recommendedName>
    <alternativeName>
        <fullName evidence="1">Lysyl-tRNA synthetase</fullName>
        <shortName evidence="1">LysRS</shortName>
    </alternativeName>
</protein>
<dbReference type="EC" id="6.1.1.6" evidence="1"/>
<dbReference type="EMBL" id="CP001020">
    <property type="protein sequence ID" value="ACJ20601.1"/>
    <property type="molecule type" value="Genomic_DNA"/>
</dbReference>
<dbReference type="RefSeq" id="WP_005771651.1">
    <property type="nucleotide sequence ID" value="NC_011528.1"/>
</dbReference>
<dbReference type="SMR" id="B6J8K2"/>
<dbReference type="KEGG" id="cbc:CbuK_1428"/>
<dbReference type="HOGENOM" id="CLU_008255_6_0_6"/>
<dbReference type="GO" id="GO:0005829">
    <property type="term" value="C:cytosol"/>
    <property type="evidence" value="ECO:0007669"/>
    <property type="project" value="TreeGrafter"/>
</dbReference>
<dbReference type="GO" id="GO:0005524">
    <property type="term" value="F:ATP binding"/>
    <property type="evidence" value="ECO:0007669"/>
    <property type="project" value="UniProtKB-UniRule"/>
</dbReference>
<dbReference type="GO" id="GO:0004824">
    <property type="term" value="F:lysine-tRNA ligase activity"/>
    <property type="evidence" value="ECO:0007669"/>
    <property type="project" value="UniProtKB-UniRule"/>
</dbReference>
<dbReference type="GO" id="GO:0000287">
    <property type="term" value="F:magnesium ion binding"/>
    <property type="evidence" value="ECO:0007669"/>
    <property type="project" value="UniProtKB-UniRule"/>
</dbReference>
<dbReference type="GO" id="GO:0000049">
    <property type="term" value="F:tRNA binding"/>
    <property type="evidence" value="ECO:0007669"/>
    <property type="project" value="TreeGrafter"/>
</dbReference>
<dbReference type="GO" id="GO:0006430">
    <property type="term" value="P:lysyl-tRNA aminoacylation"/>
    <property type="evidence" value="ECO:0007669"/>
    <property type="project" value="UniProtKB-UniRule"/>
</dbReference>
<dbReference type="CDD" id="cd00775">
    <property type="entry name" value="LysRS_core"/>
    <property type="match status" value="1"/>
</dbReference>
<dbReference type="CDD" id="cd04322">
    <property type="entry name" value="LysRS_N"/>
    <property type="match status" value="1"/>
</dbReference>
<dbReference type="FunFam" id="2.40.50.140:FF:000024">
    <property type="entry name" value="Lysine--tRNA ligase"/>
    <property type="match status" value="1"/>
</dbReference>
<dbReference type="FunFam" id="3.30.930.10:FF:000001">
    <property type="entry name" value="Lysine--tRNA ligase"/>
    <property type="match status" value="1"/>
</dbReference>
<dbReference type="Gene3D" id="3.30.930.10">
    <property type="entry name" value="Bira Bifunctional Protein, Domain 2"/>
    <property type="match status" value="1"/>
</dbReference>
<dbReference type="Gene3D" id="2.40.50.140">
    <property type="entry name" value="Nucleic acid-binding proteins"/>
    <property type="match status" value="1"/>
</dbReference>
<dbReference type="HAMAP" id="MF_00252">
    <property type="entry name" value="Lys_tRNA_synth_class2"/>
    <property type="match status" value="1"/>
</dbReference>
<dbReference type="InterPro" id="IPR004364">
    <property type="entry name" value="Aa-tRNA-synt_II"/>
</dbReference>
<dbReference type="InterPro" id="IPR006195">
    <property type="entry name" value="aa-tRNA-synth_II"/>
</dbReference>
<dbReference type="InterPro" id="IPR045864">
    <property type="entry name" value="aa-tRNA-synth_II/BPL/LPL"/>
</dbReference>
<dbReference type="InterPro" id="IPR002313">
    <property type="entry name" value="Lys-tRNA-ligase_II"/>
</dbReference>
<dbReference type="InterPro" id="IPR044136">
    <property type="entry name" value="Lys-tRNA-ligase_II_N"/>
</dbReference>
<dbReference type="InterPro" id="IPR018149">
    <property type="entry name" value="Lys-tRNA-synth_II_C"/>
</dbReference>
<dbReference type="InterPro" id="IPR012340">
    <property type="entry name" value="NA-bd_OB-fold"/>
</dbReference>
<dbReference type="InterPro" id="IPR004365">
    <property type="entry name" value="NA-bd_OB_tRNA"/>
</dbReference>
<dbReference type="NCBIfam" id="TIGR00499">
    <property type="entry name" value="lysS_bact"/>
    <property type="match status" value="1"/>
</dbReference>
<dbReference type="NCBIfam" id="NF001756">
    <property type="entry name" value="PRK00484.1"/>
    <property type="match status" value="1"/>
</dbReference>
<dbReference type="PANTHER" id="PTHR42918:SF15">
    <property type="entry name" value="LYSINE--TRNA LIGASE, CHLOROPLASTIC_MITOCHONDRIAL"/>
    <property type="match status" value="1"/>
</dbReference>
<dbReference type="PANTHER" id="PTHR42918">
    <property type="entry name" value="LYSYL-TRNA SYNTHETASE"/>
    <property type="match status" value="1"/>
</dbReference>
<dbReference type="Pfam" id="PF00152">
    <property type="entry name" value="tRNA-synt_2"/>
    <property type="match status" value="1"/>
</dbReference>
<dbReference type="Pfam" id="PF01336">
    <property type="entry name" value="tRNA_anti-codon"/>
    <property type="match status" value="1"/>
</dbReference>
<dbReference type="PRINTS" id="PR00982">
    <property type="entry name" value="TRNASYNTHLYS"/>
</dbReference>
<dbReference type="SUPFAM" id="SSF55681">
    <property type="entry name" value="Class II aaRS and biotin synthetases"/>
    <property type="match status" value="1"/>
</dbReference>
<dbReference type="SUPFAM" id="SSF50249">
    <property type="entry name" value="Nucleic acid-binding proteins"/>
    <property type="match status" value="1"/>
</dbReference>
<dbReference type="PROSITE" id="PS50862">
    <property type="entry name" value="AA_TRNA_LIGASE_II"/>
    <property type="match status" value="1"/>
</dbReference>
<comment type="catalytic activity">
    <reaction evidence="1">
        <text>tRNA(Lys) + L-lysine + ATP = L-lysyl-tRNA(Lys) + AMP + diphosphate</text>
        <dbReference type="Rhea" id="RHEA:20792"/>
        <dbReference type="Rhea" id="RHEA-COMP:9696"/>
        <dbReference type="Rhea" id="RHEA-COMP:9697"/>
        <dbReference type="ChEBI" id="CHEBI:30616"/>
        <dbReference type="ChEBI" id="CHEBI:32551"/>
        <dbReference type="ChEBI" id="CHEBI:33019"/>
        <dbReference type="ChEBI" id="CHEBI:78442"/>
        <dbReference type="ChEBI" id="CHEBI:78529"/>
        <dbReference type="ChEBI" id="CHEBI:456215"/>
        <dbReference type="EC" id="6.1.1.6"/>
    </reaction>
</comment>
<comment type="cofactor">
    <cofactor evidence="1">
        <name>Mg(2+)</name>
        <dbReference type="ChEBI" id="CHEBI:18420"/>
    </cofactor>
    <text evidence="1">Binds 3 Mg(2+) ions per subunit.</text>
</comment>
<comment type="subunit">
    <text evidence="1">Homodimer.</text>
</comment>
<comment type="subcellular location">
    <subcellularLocation>
        <location evidence="1">Cytoplasm</location>
    </subcellularLocation>
</comment>
<comment type="similarity">
    <text evidence="1">Belongs to the class-II aminoacyl-tRNA synthetase family.</text>
</comment>